<comment type="function">
    <text evidence="1">Non-catalytic component of the proteasome, a multicatalytic proteinase complex which is characterized by its ability to cleave peptides with Arg, Phe, Tyr, Leu, and Glu adjacent to the leaving group at neutral or slightly basic pH. The proteasome has an ATP-dependent proteolytic activity (By similarity).</text>
</comment>
<comment type="subunit">
    <text evidence="1">The 26S proteasome consists of a 20S proteasome core and two 19S regulatory subunits. The 20S proteasome core is composed of 28 subunits that are arranged in four stacked rings, resulting in a barrel-shaped structure. The two end rings are each formed by seven alpha subunits, and the two central rings are each formed by seven beta subunits. The catalytic chamber with the active sites is on the inside of the barrel (By similarity).</text>
</comment>
<comment type="interaction">
    <interactant intactId="EBI-98473">
        <id>Q9VNA5</id>
    </interactant>
    <interactant intactId="EBI-98978">
        <id>P40301</id>
        <label>Prosalpha2</label>
    </interactant>
    <organismsDiffer>false</organismsDiffer>
    <experiments>3</experiments>
</comment>
<comment type="interaction">
    <interactant intactId="EBI-98473">
        <id>Q9VNA5</id>
    </interactant>
    <interactant intactId="EBI-116800">
        <id>Q7K148</id>
        <label>Prosbeta5</label>
    </interactant>
    <organismsDiffer>false</organismsDiffer>
    <experiments>3</experiments>
</comment>
<comment type="subcellular location">
    <subcellularLocation>
        <location evidence="2">Cytoplasm</location>
    </subcellularLocation>
    <subcellularLocation>
        <location evidence="1">Nucleus</location>
    </subcellularLocation>
</comment>
<comment type="similarity">
    <text evidence="2">Belongs to the peptidase T1B family.</text>
</comment>
<organism>
    <name type="scientific">Drosophila melanogaster</name>
    <name type="common">Fruit fly</name>
    <dbReference type="NCBI Taxonomy" id="7227"/>
    <lineage>
        <taxon>Eukaryota</taxon>
        <taxon>Metazoa</taxon>
        <taxon>Ecdysozoa</taxon>
        <taxon>Arthropoda</taxon>
        <taxon>Hexapoda</taxon>
        <taxon>Insecta</taxon>
        <taxon>Pterygota</taxon>
        <taxon>Neoptera</taxon>
        <taxon>Endopterygota</taxon>
        <taxon>Diptera</taxon>
        <taxon>Brachycera</taxon>
        <taxon>Muscomorpha</taxon>
        <taxon>Ephydroidea</taxon>
        <taxon>Drosophilidae</taxon>
        <taxon>Drosophila</taxon>
        <taxon>Sophophora</taxon>
    </lineage>
</organism>
<proteinExistence type="evidence at protein level"/>
<reference key="1">
    <citation type="journal article" date="2000" name="Science">
        <title>The genome sequence of Drosophila melanogaster.</title>
        <authorList>
            <person name="Adams M.D."/>
            <person name="Celniker S.E."/>
            <person name="Holt R.A."/>
            <person name="Evans C.A."/>
            <person name="Gocayne J.D."/>
            <person name="Amanatides P.G."/>
            <person name="Scherer S.E."/>
            <person name="Li P.W."/>
            <person name="Hoskins R.A."/>
            <person name="Galle R.F."/>
            <person name="George R.A."/>
            <person name="Lewis S.E."/>
            <person name="Richards S."/>
            <person name="Ashburner M."/>
            <person name="Henderson S.N."/>
            <person name="Sutton G.G."/>
            <person name="Wortman J.R."/>
            <person name="Yandell M.D."/>
            <person name="Zhang Q."/>
            <person name="Chen L.X."/>
            <person name="Brandon R.C."/>
            <person name="Rogers Y.-H.C."/>
            <person name="Blazej R.G."/>
            <person name="Champe M."/>
            <person name="Pfeiffer B.D."/>
            <person name="Wan K.H."/>
            <person name="Doyle C."/>
            <person name="Baxter E.G."/>
            <person name="Helt G."/>
            <person name="Nelson C.R."/>
            <person name="Miklos G.L.G."/>
            <person name="Abril J.F."/>
            <person name="Agbayani A."/>
            <person name="An H.-J."/>
            <person name="Andrews-Pfannkoch C."/>
            <person name="Baldwin D."/>
            <person name="Ballew R.M."/>
            <person name="Basu A."/>
            <person name="Baxendale J."/>
            <person name="Bayraktaroglu L."/>
            <person name="Beasley E.M."/>
            <person name="Beeson K.Y."/>
            <person name="Benos P.V."/>
            <person name="Berman B.P."/>
            <person name="Bhandari D."/>
            <person name="Bolshakov S."/>
            <person name="Borkova D."/>
            <person name="Botchan M.R."/>
            <person name="Bouck J."/>
            <person name="Brokstein P."/>
            <person name="Brottier P."/>
            <person name="Burtis K.C."/>
            <person name="Busam D.A."/>
            <person name="Butler H."/>
            <person name="Cadieu E."/>
            <person name="Center A."/>
            <person name="Chandra I."/>
            <person name="Cherry J.M."/>
            <person name="Cawley S."/>
            <person name="Dahlke C."/>
            <person name="Davenport L.B."/>
            <person name="Davies P."/>
            <person name="de Pablos B."/>
            <person name="Delcher A."/>
            <person name="Deng Z."/>
            <person name="Mays A.D."/>
            <person name="Dew I."/>
            <person name="Dietz S.M."/>
            <person name="Dodson K."/>
            <person name="Doup L.E."/>
            <person name="Downes M."/>
            <person name="Dugan-Rocha S."/>
            <person name="Dunkov B.C."/>
            <person name="Dunn P."/>
            <person name="Durbin K.J."/>
            <person name="Evangelista C.C."/>
            <person name="Ferraz C."/>
            <person name="Ferriera S."/>
            <person name="Fleischmann W."/>
            <person name="Fosler C."/>
            <person name="Gabrielian A.E."/>
            <person name="Garg N.S."/>
            <person name="Gelbart W.M."/>
            <person name="Glasser K."/>
            <person name="Glodek A."/>
            <person name="Gong F."/>
            <person name="Gorrell J.H."/>
            <person name="Gu Z."/>
            <person name="Guan P."/>
            <person name="Harris M."/>
            <person name="Harris N.L."/>
            <person name="Harvey D.A."/>
            <person name="Heiman T.J."/>
            <person name="Hernandez J.R."/>
            <person name="Houck J."/>
            <person name="Hostin D."/>
            <person name="Houston K.A."/>
            <person name="Howland T.J."/>
            <person name="Wei M.-H."/>
            <person name="Ibegwam C."/>
            <person name="Jalali M."/>
            <person name="Kalush F."/>
            <person name="Karpen G.H."/>
            <person name="Ke Z."/>
            <person name="Kennison J.A."/>
            <person name="Ketchum K.A."/>
            <person name="Kimmel B.E."/>
            <person name="Kodira C.D."/>
            <person name="Kraft C.L."/>
            <person name="Kravitz S."/>
            <person name="Kulp D."/>
            <person name="Lai Z."/>
            <person name="Lasko P."/>
            <person name="Lei Y."/>
            <person name="Levitsky A.A."/>
            <person name="Li J.H."/>
            <person name="Li Z."/>
            <person name="Liang Y."/>
            <person name="Lin X."/>
            <person name="Liu X."/>
            <person name="Mattei B."/>
            <person name="McIntosh T.C."/>
            <person name="McLeod M.P."/>
            <person name="McPherson D."/>
            <person name="Merkulov G."/>
            <person name="Milshina N.V."/>
            <person name="Mobarry C."/>
            <person name="Morris J."/>
            <person name="Moshrefi A."/>
            <person name="Mount S.M."/>
            <person name="Moy M."/>
            <person name="Murphy B."/>
            <person name="Murphy L."/>
            <person name="Muzny D.M."/>
            <person name="Nelson D.L."/>
            <person name="Nelson D.R."/>
            <person name="Nelson K.A."/>
            <person name="Nixon K."/>
            <person name="Nusskern D.R."/>
            <person name="Pacleb J.M."/>
            <person name="Palazzolo M."/>
            <person name="Pittman G.S."/>
            <person name="Pan S."/>
            <person name="Pollard J."/>
            <person name="Puri V."/>
            <person name="Reese M.G."/>
            <person name="Reinert K."/>
            <person name="Remington K."/>
            <person name="Saunders R.D.C."/>
            <person name="Scheeler F."/>
            <person name="Shen H."/>
            <person name="Shue B.C."/>
            <person name="Siden-Kiamos I."/>
            <person name="Simpson M."/>
            <person name="Skupski M.P."/>
            <person name="Smith T.J."/>
            <person name="Spier E."/>
            <person name="Spradling A.C."/>
            <person name="Stapleton M."/>
            <person name="Strong R."/>
            <person name="Sun E."/>
            <person name="Svirskas R."/>
            <person name="Tector C."/>
            <person name="Turner R."/>
            <person name="Venter E."/>
            <person name="Wang A.H."/>
            <person name="Wang X."/>
            <person name="Wang Z.-Y."/>
            <person name="Wassarman D.A."/>
            <person name="Weinstock G.M."/>
            <person name="Weissenbach J."/>
            <person name="Williams S.M."/>
            <person name="Woodage T."/>
            <person name="Worley K.C."/>
            <person name="Wu D."/>
            <person name="Yang S."/>
            <person name="Yao Q.A."/>
            <person name="Ye J."/>
            <person name="Yeh R.-F."/>
            <person name="Zaveri J.S."/>
            <person name="Zhan M."/>
            <person name="Zhang G."/>
            <person name="Zhao Q."/>
            <person name="Zheng L."/>
            <person name="Zheng X.H."/>
            <person name="Zhong F.N."/>
            <person name="Zhong W."/>
            <person name="Zhou X."/>
            <person name="Zhu S.C."/>
            <person name="Zhu X."/>
            <person name="Smith H.O."/>
            <person name="Gibbs R.A."/>
            <person name="Myers E.W."/>
            <person name="Rubin G.M."/>
            <person name="Venter J.C."/>
        </authorList>
    </citation>
    <scope>NUCLEOTIDE SEQUENCE [LARGE SCALE GENOMIC DNA]</scope>
    <source>
        <strain>Berkeley</strain>
    </source>
</reference>
<reference key="2">
    <citation type="journal article" date="2002" name="Genome Biol.">
        <title>Annotation of the Drosophila melanogaster euchromatic genome: a systematic review.</title>
        <authorList>
            <person name="Misra S."/>
            <person name="Crosby M.A."/>
            <person name="Mungall C.J."/>
            <person name="Matthews B.B."/>
            <person name="Campbell K.S."/>
            <person name="Hradecky P."/>
            <person name="Huang Y."/>
            <person name="Kaminker J.S."/>
            <person name="Millburn G.H."/>
            <person name="Prochnik S.E."/>
            <person name="Smith C.D."/>
            <person name="Tupy J.L."/>
            <person name="Whitfield E.J."/>
            <person name="Bayraktaroglu L."/>
            <person name="Berman B.P."/>
            <person name="Bettencourt B.R."/>
            <person name="Celniker S.E."/>
            <person name="de Grey A.D.N.J."/>
            <person name="Drysdale R.A."/>
            <person name="Harris N.L."/>
            <person name="Richter J."/>
            <person name="Russo S."/>
            <person name="Schroeder A.J."/>
            <person name="Shu S.Q."/>
            <person name="Stapleton M."/>
            <person name="Yamada C."/>
            <person name="Ashburner M."/>
            <person name="Gelbart W.M."/>
            <person name="Rubin G.M."/>
            <person name="Lewis S.E."/>
        </authorList>
    </citation>
    <scope>GENOME REANNOTATION</scope>
    <source>
        <strain>Berkeley</strain>
    </source>
</reference>
<reference key="3">
    <citation type="journal article" date="2002" name="Genome Biol.">
        <title>A Drosophila full-length cDNA resource.</title>
        <authorList>
            <person name="Stapleton M."/>
            <person name="Carlson J.W."/>
            <person name="Brokstein P."/>
            <person name="Yu C."/>
            <person name="Champe M."/>
            <person name="George R.A."/>
            <person name="Guarin H."/>
            <person name="Kronmiller B."/>
            <person name="Pacleb J.M."/>
            <person name="Park S."/>
            <person name="Wan K.H."/>
            <person name="Rubin G.M."/>
            <person name="Celniker S.E."/>
        </authorList>
    </citation>
    <scope>NUCLEOTIDE SEQUENCE [LARGE SCALE MRNA]</scope>
    <source>
        <strain>Berkeley</strain>
        <tissue>Embryo</tissue>
    </source>
</reference>
<reference key="4">
    <citation type="journal article" date="2007" name="Science">
        <title>Genes required for mitotic spindle assembly in Drosophila S2 cells.</title>
        <authorList>
            <person name="Goshima G."/>
            <person name="Wollman R."/>
            <person name="Goodwin S.S."/>
            <person name="Zhang N."/>
            <person name="Scholey J.M."/>
            <person name="Vale R.D."/>
            <person name="Stuurman N."/>
        </authorList>
    </citation>
    <scope>IDENTIFICATION</scope>
</reference>
<dbReference type="EMBL" id="AE014297">
    <property type="protein sequence ID" value="AAF52041.1"/>
    <property type="molecule type" value="Genomic_DNA"/>
</dbReference>
<dbReference type="EMBL" id="AE014297">
    <property type="protein sequence ID" value="AAN13277.1"/>
    <property type="molecule type" value="Genomic_DNA"/>
</dbReference>
<dbReference type="EMBL" id="AY118936">
    <property type="protein sequence ID" value="AAM50796.1"/>
    <property type="molecule type" value="mRNA"/>
</dbReference>
<dbReference type="RefSeq" id="NP_649529.1">
    <property type="nucleotide sequence ID" value="NM_141272.1"/>
</dbReference>
<dbReference type="RefSeq" id="NP_730922.1">
    <property type="nucleotide sequence ID" value="NM_169049.2"/>
</dbReference>
<dbReference type="SMR" id="Q9VNA5"/>
<dbReference type="BioGRID" id="65850">
    <property type="interactions" value="45"/>
</dbReference>
<dbReference type="ComplexPortal" id="CPX-9070">
    <property type="entry name" value="26S proteasome complex"/>
</dbReference>
<dbReference type="ComplexPortal" id="CPX-9087">
    <property type="entry name" value="26S proteasome complex, testis-specific variant"/>
</dbReference>
<dbReference type="DIP" id="DIP-19164N"/>
<dbReference type="FunCoup" id="Q9VNA5">
    <property type="interactions" value="2107"/>
</dbReference>
<dbReference type="IntAct" id="Q9VNA5">
    <property type="interactions" value="114"/>
</dbReference>
<dbReference type="STRING" id="7227.FBpp0078448"/>
<dbReference type="PaxDb" id="7227-FBpp0078448"/>
<dbReference type="DNASU" id="40639"/>
<dbReference type="EnsemblMetazoa" id="FBtr0078805">
    <property type="protein sequence ID" value="FBpp0078448"/>
    <property type="gene ID" value="FBgn0250746"/>
</dbReference>
<dbReference type="EnsemblMetazoa" id="FBtr0078806">
    <property type="protein sequence ID" value="FBpp0078449"/>
    <property type="gene ID" value="FBgn0250746"/>
</dbReference>
<dbReference type="GeneID" id="40639"/>
<dbReference type="KEGG" id="dme:Dmel_CG12000"/>
<dbReference type="AGR" id="FB:FBgn0250746"/>
<dbReference type="CTD" id="40639"/>
<dbReference type="FlyBase" id="FBgn0250746">
    <property type="gene designation" value="Prosbeta7"/>
</dbReference>
<dbReference type="VEuPathDB" id="VectorBase:FBgn0250746"/>
<dbReference type="eggNOG" id="KOG0185">
    <property type="taxonomic scope" value="Eukaryota"/>
</dbReference>
<dbReference type="GeneTree" id="ENSGT00390000000698"/>
<dbReference type="HOGENOM" id="CLU_072435_2_0_1"/>
<dbReference type="InParanoid" id="Q9VNA5"/>
<dbReference type="OMA" id="QPIMRRY"/>
<dbReference type="OrthoDB" id="7854943at2759"/>
<dbReference type="PhylomeDB" id="Q9VNA5"/>
<dbReference type="Reactome" id="R-DME-1169091">
    <property type="pathway name" value="Activation of NF-kappaB in B cells"/>
</dbReference>
<dbReference type="Reactome" id="R-DME-1234176">
    <property type="pathway name" value="Oxygen-dependent proline hydroxylation of Hypoxia-inducible Factor Alpha"/>
</dbReference>
<dbReference type="Reactome" id="R-DME-1236978">
    <property type="pathway name" value="Cross-presentation of soluble exogenous antigens (endosomes)"/>
</dbReference>
<dbReference type="Reactome" id="R-DME-174084">
    <property type="pathway name" value="Autodegradation of Cdh1 by Cdh1:APC/C"/>
</dbReference>
<dbReference type="Reactome" id="R-DME-174154">
    <property type="pathway name" value="APC/C:Cdc20 mediated degradation of Securin"/>
</dbReference>
<dbReference type="Reactome" id="R-DME-174178">
    <property type="pathway name" value="APC/C:Cdh1 mediated degradation of Cdc20 and other APC/C:Cdh1 targeted proteins in late mitosis/early G1"/>
</dbReference>
<dbReference type="Reactome" id="R-DME-174184">
    <property type="pathway name" value="Cdc20:Phospho-APC/C mediated degradation of Cyclin A"/>
</dbReference>
<dbReference type="Reactome" id="R-DME-187577">
    <property type="pathway name" value="SCF(Skp2)-mediated degradation of p27/p21"/>
</dbReference>
<dbReference type="Reactome" id="R-DME-195253">
    <property type="pathway name" value="Degradation of beta-catenin by the destruction complex"/>
</dbReference>
<dbReference type="Reactome" id="R-DME-202424">
    <property type="pathway name" value="Downstream TCR signaling"/>
</dbReference>
<dbReference type="Reactome" id="R-DME-209360">
    <property type="pathway name" value="Ubiquitination and proteolysis of phosphorylated CI"/>
</dbReference>
<dbReference type="Reactome" id="R-DME-209406">
    <property type="pathway name" value="Degradation of NF-kappa-B inhibitor, CACT"/>
</dbReference>
<dbReference type="Reactome" id="R-DME-209461">
    <property type="pathway name" value="Ubiquitination and degradation of phosphorylated ARM"/>
</dbReference>
<dbReference type="Reactome" id="R-DME-216167">
    <property type="pathway name" value="Nuclear CI is degraded"/>
</dbReference>
<dbReference type="Reactome" id="R-DME-2467813">
    <property type="pathway name" value="Separation of Sister Chromatids"/>
</dbReference>
<dbReference type="Reactome" id="R-DME-2871837">
    <property type="pathway name" value="FCERI mediated NF-kB activation"/>
</dbReference>
<dbReference type="Reactome" id="R-DME-350562">
    <property type="pathway name" value="Regulation of ornithine decarboxylase (ODC)"/>
</dbReference>
<dbReference type="Reactome" id="R-DME-382556">
    <property type="pathway name" value="ABC-family proteins mediated transport"/>
</dbReference>
<dbReference type="Reactome" id="R-DME-432395">
    <property type="pathway name" value="Degradation of TIM"/>
</dbReference>
<dbReference type="Reactome" id="R-DME-432524">
    <property type="pathway name" value="Degradation of PER"/>
</dbReference>
<dbReference type="Reactome" id="R-DME-432626">
    <property type="pathway name" value="Circadian Clock pathway"/>
</dbReference>
<dbReference type="Reactome" id="R-DME-450408">
    <property type="pathway name" value="AUF1 (hnRNP D0) binds and destabilizes mRNA"/>
</dbReference>
<dbReference type="Reactome" id="R-DME-4608870">
    <property type="pathway name" value="Asymmetric localization of PCP proteins"/>
</dbReference>
<dbReference type="Reactome" id="R-DME-4641257">
    <property type="pathway name" value="Degradation of AXIN"/>
</dbReference>
<dbReference type="Reactome" id="R-DME-4641258">
    <property type="pathway name" value="Degradation of DVL"/>
</dbReference>
<dbReference type="Reactome" id="R-DME-5358346">
    <property type="pathway name" value="Hedgehog ligand biogenesis"/>
</dbReference>
<dbReference type="Reactome" id="R-DME-538864">
    <property type="pathway name" value="Degradation of CRY"/>
</dbReference>
<dbReference type="Reactome" id="R-DME-5607761">
    <property type="pathway name" value="Dectin-1 mediated noncanonical NF-kB signaling"/>
</dbReference>
<dbReference type="Reactome" id="R-DME-5607764">
    <property type="pathway name" value="CLEC7A (Dectin-1) signaling"/>
</dbReference>
<dbReference type="Reactome" id="R-DME-5610780">
    <property type="pathway name" value="Degradation of GLI1 by the proteasome"/>
</dbReference>
<dbReference type="Reactome" id="R-DME-5610785">
    <property type="pathway name" value="GLI3 is processed to GLI3R by the proteasome"/>
</dbReference>
<dbReference type="Reactome" id="R-DME-5632684">
    <property type="pathway name" value="Hedgehog 'on' state"/>
</dbReference>
<dbReference type="Reactome" id="R-DME-5658442">
    <property type="pathway name" value="Regulation of RAS by GAPs"/>
</dbReference>
<dbReference type="Reactome" id="R-DME-5676590">
    <property type="pathway name" value="NIK--&gt;noncanonical NF-kB signaling"/>
</dbReference>
<dbReference type="Reactome" id="R-DME-5689603">
    <property type="pathway name" value="UCH proteinases"/>
</dbReference>
<dbReference type="Reactome" id="R-DME-5689880">
    <property type="pathway name" value="Ub-specific processing proteases"/>
</dbReference>
<dbReference type="Reactome" id="R-DME-68949">
    <property type="pathway name" value="Orc1 removal from chromatin"/>
</dbReference>
<dbReference type="Reactome" id="R-DME-69017">
    <property type="pathway name" value="CDK-mediated phosphorylation and removal of Cdc6"/>
</dbReference>
<dbReference type="Reactome" id="R-DME-69601">
    <property type="pathway name" value="Ubiquitin Mediated Degradation of Phosphorylated Cdc25A"/>
</dbReference>
<dbReference type="Reactome" id="R-DME-75815">
    <property type="pathway name" value="Ubiquitin-dependent degradation of Cyclin D"/>
</dbReference>
<dbReference type="Reactome" id="R-DME-8854050">
    <property type="pathway name" value="FBXL7 down-regulates AURKA during mitotic entry and in early mitosis"/>
</dbReference>
<dbReference type="Reactome" id="R-DME-8939236">
    <property type="pathway name" value="RUNX1 regulates transcription of genes involved in differentiation of HSCs"/>
</dbReference>
<dbReference type="Reactome" id="R-DME-8939902">
    <property type="pathway name" value="Regulation of RUNX2 expression and activity"/>
</dbReference>
<dbReference type="Reactome" id="R-DME-8941858">
    <property type="pathway name" value="Regulation of RUNX3 expression and activity"/>
</dbReference>
<dbReference type="Reactome" id="R-DME-8948751">
    <property type="pathway name" value="Regulation of PTEN stability and activity"/>
</dbReference>
<dbReference type="Reactome" id="R-DME-8951664">
    <property type="pathway name" value="Neddylation"/>
</dbReference>
<dbReference type="Reactome" id="R-DME-9020702">
    <property type="pathway name" value="Interleukin-1 signaling"/>
</dbReference>
<dbReference type="Reactome" id="R-DME-9755511">
    <property type="pathway name" value="KEAP1-NFE2L2 pathway"/>
</dbReference>
<dbReference type="Reactome" id="R-DME-9762114">
    <property type="pathway name" value="GSK3B and BTRC:CUL1-mediated-degradation of NFE2L2"/>
</dbReference>
<dbReference type="Reactome" id="R-DME-983168">
    <property type="pathway name" value="Antigen processing: Ubiquitination &amp; Proteasome degradation"/>
</dbReference>
<dbReference type="Reactome" id="R-DME-9907900">
    <property type="pathway name" value="Proteasome assembly"/>
</dbReference>
<dbReference type="BioGRID-ORCS" id="40639">
    <property type="hits" value="1 hit in 1 CRISPR screen"/>
</dbReference>
<dbReference type="ChiTaRS" id="Prosbeta7">
    <property type="organism name" value="fly"/>
</dbReference>
<dbReference type="GenomeRNAi" id="40639"/>
<dbReference type="PRO" id="PR:Q9VNA5"/>
<dbReference type="Proteomes" id="UP000000803">
    <property type="component" value="Chromosome 3R"/>
</dbReference>
<dbReference type="Bgee" id="FBgn0250746">
    <property type="expression patterns" value="Expressed in egg cell and 190 other cell types or tissues"/>
</dbReference>
<dbReference type="GO" id="GO:0005829">
    <property type="term" value="C:cytosol"/>
    <property type="evidence" value="ECO:0000318"/>
    <property type="project" value="GO_Central"/>
</dbReference>
<dbReference type="GO" id="GO:0005654">
    <property type="term" value="C:nucleoplasm"/>
    <property type="evidence" value="ECO:0000304"/>
    <property type="project" value="Reactome"/>
</dbReference>
<dbReference type="GO" id="GO:0005634">
    <property type="term" value="C:nucleus"/>
    <property type="evidence" value="ECO:0000318"/>
    <property type="project" value="GO_Central"/>
</dbReference>
<dbReference type="GO" id="GO:0000502">
    <property type="term" value="C:proteasome complex"/>
    <property type="evidence" value="ECO:0000314"/>
    <property type="project" value="FlyBase"/>
</dbReference>
<dbReference type="GO" id="GO:0005839">
    <property type="term" value="C:proteasome core complex"/>
    <property type="evidence" value="ECO:0000314"/>
    <property type="project" value="FlyBase"/>
</dbReference>
<dbReference type="GO" id="GO:0019774">
    <property type="term" value="C:proteasome core complex, beta-subunit complex"/>
    <property type="evidence" value="ECO:0000250"/>
    <property type="project" value="UniProtKB"/>
</dbReference>
<dbReference type="GO" id="GO:0007098">
    <property type="term" value="P:centrosome cycle"/>
    <property type="evidence" value="ECO:0000315"/>
    <property type="project" value="FlyBase"/>
</dbReference>
<dbReference type="GO" id="GO:0043161">
    <property type="term" value="P:proteasome-mediated ubiquitin-dependent protein catabolic process"/>
    <property type="evidence" value="ECO:0000318"/>
    <property type="project" value="GO_Central"/>
</dbReference>
<dbReference type="CDD" id="cd03760">
    <property type="entry name" value="proteasome_beta_type_4"/>
    <property type="match status" value="1"/>
</dbReference>
<dbReference type="FunFam" id="3.60.20.10:FF:000070">
    <property type="entry name" value="Proteasome subunit beta"/>
    <property type="match status" value="1"/>
</dbReference>
<dbReference type="Gene3D" id="3.60.20.10">
    <property type="entry name" value="Glutamine Phosphoribosylpyrophosphate, subunit 1, domain 1"/>
    <property type="match status" value="1"/>
</dbReference>
<dbReference type="InterPro" id="IPR029055">
    <property type="entry name" value="Ntn_hydrolases_N"/>
</dbReference>
<dbReference type="InterPro" id="IPR016295">
    <property type="entry name" value="Proteasome_beta4"/>
</dbReference>
<dbReference type="InterPro" id="IPR016050">
    <property type="entry name" value="Proteasome_bsu_CS"/>
</dbReference>
<dbReference type="InterPro" id="IPR001353">
    <property type="entry name" value="Proteasome_sua/b"/>
</dbReference>
<dbReference type="InterPro" id="IPR023333">
    <property type="entry name" value="Proteasome_suB-type"/>
</dbReference>
<dbReference type="PANTHER" id="PTHR32194">
    <property type="entry name" value="METALLOPROTEASE TLDD"/>
    <property type="match status" value="1"/>
</dbReference>
<dbReference type="PANTHER" id="PTHR32194:SF6">
    <property type="entry name" value="PROTEASOME SUBUNIT BETA"/>
    <property type="match status" value="1"/>
</dbReference>
<dbReference type="Pfam" id="PF00227">
    <property type="entry name" value="Proteasome"/>
    <property type="match status" value="1"/>
</dbReference>
<dbReference type="PIRSF" id="PIRSF001213">
    <property type="entry name" value="Psome_endopept_beta"/>
    <property type="match status" value="1"/>
</dbReference>
<dbReference type="SUPFAM" id="SSF56235">
    <property type="entry name" value="N-terminal nucleophile aminohydrolases (Ntn hydrolases)"/>
    <property type="match status" value="1"/>
</dbReference>
<dbReference type="PROSITE" id="PS00854">
    <property type="entry name" value="PROTEASOME_BETA_1"/>
    <property type="match status" value="1"/>
</dbReference>
<dbReference type="PROSITE" id="PS51476">
    <property type="entry name" value="PROTEASOME_BETA_2"/>
    <property type="match status" value="1"/>
</dbReference>
<evidence type="ECO:0000250" key="1"/>
<evidence type="ECO:0000255" key="2">
    <source>
        <dbReference type="PROSITE-ProRule" id="PRU00809"/>
    </source>
</evidence>
<gene>
    <name type="primary">Prosbeta7</name>
    <name type="synonym">Prosb4</name>
    <name type="synonym">Prosbeta4</name>
    <name type="ORF">CG12000</name>
</gene>
<keyword id="KW-0963">Cytoplasm</keyword>
<keyword id="KW-0539">Nucleus</keyword>
<keyword id="KW-0647">Proteasome</keyword>
<keyword id="KW-1185">Reference proteome</keyword>
<name>PSB4_DROME</name>
<sequence length="268" mass="29986">MLNNYNSLAQPMWQNGPAPGEFYNFTGGQTPVQQLPRELTTMGPYGTKHSTASSTTGTSVLGIRYDSGVMLAADTLVSYGSMARYQNIERVFKVNKNILLGGSGDFADIQSIKRNIDQKMIEDQCCDDNIEMKPKSLASWMTRVLYNRRSRMNPLYIDVVVGGVDNEGTPYLANVDLRGRSYEDYVVATGFARHLAVPLVREKKPKDRDFTAVEASELIRTCMEVLYYRDTRNISQYTVGVCSVNGCGVEGPFQVNENWTFAETIKGY</sequence>
<accession>Q9VNA5</accession>
<accession>A4V2F4</accession>
<protein>
    <recommendedName>
        <fullName>Proteasome subunit beta type-4</fullName>
    </recommendedName>
    <alternativeName>
        <fullName>Proteasome subunit beta type-7</fullName>
    </alternativeName>
</protein>
<feature type="chain" id="PRO_0000148071" description="Proteasome subunit beta type-4">
    <location>
        <begin position="1"/>
        <end position="268"/>
    </location>
</feature>